<reference key="1">
    <citation type="journal article" date="2004" name="Nucleic Acids Res.">
        <title>Comparative analysis of the Borrelia garinii genome.</title>
        <authorList>
            <person name="Gloeckner G."/>
            <person name="Lehmann R."/>
            <person name="Romualdi A."/>
            <person name="Pradella S."/>
            <person name="Schulte-Spechtel U."/>
            <person name="Schilhabel M."/>
            <person name="Wilske B."/>
            <person name="Suehnel J."/>
            <person name="Platzer M."/>
        </authorList>
    </citation>
    <scope>NUCLEOTIDE SEQUENCE [LARGE SCALE GENOMIC DNA]</scope>
    <source>
        <strain>ATCC BAA-2496 / DSM 23469 / PBi</strain>
    </source>
</reference>
<feature type="chain" id="PRO_1000004152" description="Large ribosomal subunit protein bL33">
    <location>
        <begin position="1"/>
        <end position="59"/>
    </location>
</feature>
<organism>
    <name type="scientific">Borrelia garinii subsp. bavariensis (strain ATCC BAA-2496 / DSM 23469 / PBi)</name>
    <name type="common">Borreliella bavariensis</name>
    <dbReference type="NCBI Taxonomy" id="290434"/>
    <lineage>
        <taxon>Bacteria</taxon>
        <taxon>Pseudomonadati</taxon>
        <taxon>Spirochaetota</taxon>
        <taxon>Spirochaetia</taxon>
        <taxon>Spirochaetales</taxon>
        <taxon>Borreliaceae</taxon>
        <taxon>Borreliella</taxon>
    </lineage>
</organism>
<comment type="similarity">
    <text evidence="1">Belongs to the bacterial ribosomal protein bL33 family.</text>
</comment>
<evidence type="ECO:0000255" key="1">
    <source>
        <dbReference type="HAMAP-Rule" id="MF_00294"/>
    </source>
</evidence>
<evidence type="ECO:0000305" key="2"/>
<proteinExistence type="inferred from homology"/>
<protein>
    <recommendedName>
        <fullName evidence="1">Large ribosomal subunit protein bL33</fullName>
    </recommendedName>
    <alternativeName>
        <fullName evidence="2">50S ribosomal protein L33</fullName>
    </alternativeName>
</protein>
<accession>Q661M2</accession>
<keyword id="KW-0687">Ribonucleoprotein</keyword>
<keyword id="KW-0689">Ribosomal protein</keyword>
<sequence length="59" mass="6900">MGKKKGKGAVELISLICEETGIRNYTTTKNRRNKQEKLELMKYCPKLRKHTLHKEGKIK</sequence>
<dbReference type="EMBL" id="CP000013">
    <property type="protein sequence ID" value="AAU07249.1"/>
    <property type="molecule type" value="Genomic_DNA"/>
</dbReference>
<dbReference type="RefSeq" id="WP_002556991.1">
    <property type="nucleotide sequence ID" value="NZ_CP028872.1"/>
</dbReference>
<dbReference type="SMR" id="Q661M2"/>
<dbReference type="GeneID" id="77265235"/>
<dbReference type="KEGG" id="bga:BG0398"/>
<dbReference type="eggNOG" id="COG0267">
    <property type="taxonomic scope" value="Bacteria"/>
</dbReference>
<dbReference type="HOGENOM" id="CLU_190949_0_2_12"/>
<dbReference type="OrthoDB" id="9801333at2"/>
<dbReference type="Proteomes" id="UP000002276">
    <property type="component" value="Chromosome"/>
</dbReference>
<dbReference type="GO" id="GO:0005737">
    <property type="term" value="C:cytoplasm"/>
    <property type="evidence" value="ECO:0007669"/>
    <property type="project" value="UniProtKB-ARBA"/>
</dbReference>
<dbReference type="GO" id="GO:1990904">
    <property type="term" value="C:ribonucleoprotein complex"/>
    <property type="evidence" value="ECO:0007669"/>
    <property type="project" value="UniProtKB-KW"/>
</dbReference>
<dbReference type="GO" id="GO:0005840">
    <property type="term" value="C:ribosome"/>
    <property type="evidence" value="ECO:0007669"/>
    <property type="project" value="UniProtKB-KW"/>
</dbReference>
<dbReference type="GO" id="GO:0003735">
    <property type="term" value="F:structural constituent of ribosome"/>
    <property type="evidence" value="ECO:0007669"/>
    <property type="project" value="InterPro"/>
</dbReference>
<dbReference type="GO" id="GO:0006412">
    <property type="term" value="P:translation"/>
    <property type="evidence" value="ECO:0007669"/>
    <property type="project" value="UniProtKB-UniRule"/>
</dbReference>
<dbReference type="Gene3D" id="2.20.28.120">
    <property type="entry name" value="Ribosomal protein L33"/>
    <property type="match status" value="1"/>
</dbReference>
<dbReference type="HAMAP" id="MF_00294">
    <property type="entry name" value="Ribosomal_bL33"/>
    <property type="match status" value="1"/>
</dbReference>
<dbReference type="InterPro" id="IPR001705">
    <property type="entry name" value="Ribosomal_bL33"/>
</dbReference>
<dbReference type="InterPro" id="IPR018264">
    <property type="entry name" value="Ribosomal_bL33_CS"/>
</dbReference>
<dbReference type="InterPro" id="IPR038584">
    <property type="entry name" value="Ribosomal_bL33_sf"/>
</dbReference>
<dbReference type="InterPro" id="IPR011332">
    <property type="entry name" value="Ribosomal_zn-bd"/>
</dbReference>
<dbReference type="NCBIfam" id="NF001764">
    <property type="entry name" value="PRK00504.1"/>
    <property type="match status" value="1"/>
</dbReference>
<dbReference type="NCBIfam" id="NF001860">
    <property type="entry name" value="PRK00595.1"/>
    <property type="match status" value="1"/>
</dbReference>
<dbReference type="NCBIfam" id="TIGR01023">
    <property type="entry name" value="rpmG_bact"/>
    <property type="match status" value="1"/>
</dbReference>
<dbReference type="PANTHER" id="PTHR43168">
    <property type="entry name" value="50S RIBOSOMAL PROTEIN L33, CHLOROPLASTIC"/>
    <property type="match status" value="1"/>
</dbReference>
<dbReference type="PANTHER" id="PTHR43168:SF2">
    <property type="entry name" value="LARGE RIBOSOMAL SUBUNIT PROTEIN BL33C"/>
    <property type="match status" value="1"/>
</dbReference>
<dbReference type="Pfam" id="PF00471">
    <property type="entry name" value="Ribosomal_L33"/>
    <property type="match status" value="1"/>
</dbReference>
<dbReference type="SUPFAM" id="SSF57829">
    <property type="entry name" value="Zn-binding ribosomal proteins"/>
    <property type="match status" value="1"/>
</dbReference>
<dbReference type="PROSITE" id="PS00582">
    <property type="entry name" value="RIBOSOMAL_L33"/>
    <property type="match status" value="1"/>
</dbReference>
<gene>
    <name evidence="1" type="primary">rpmG</name>
    <name type="ordered locus">BG0398</name>
</gene>
<name>RL33_BORGP</name>